<feature type="chain" id="PRO_0000405159" description="Genome polyprotein">
    <location>
        <begin position="1"/>
        <end position="3411"/>
    </location>
</feature>
<feature type="chain" id="PRO_0000261515" description="Capsid protein C" evidence="2">
    <location>
        <begin position="1"/>
        <end position="101"/>
    </location>
</feature>
<feature type="propeptide" id="PRO_0000261516" description="ER anchor for the capsid protein C, removed in mature form by serine protease NS3" evidence="2">
    <location>
        <begin position="102"/>
        <end position="121"/>
    </location>
</feature>
<feature type="chain" id="PRO_0000261517" description="Protein prM" evidence="7">
    <location>
        <begin position="122"/>
        <end position="285"/>
    </location>
</feature>
<feature type="chain" id="PRO_0000261518" description="Peptide pr" evidence="7">
    <location>
        <begin position="122"/>
        <end position="210"/>
    </location>
</feature>
<feature type="chain" id="PRO_0000261519" description="Small envelope protein M" evidence="7">
    <location>
        <begin position="211"/>
        <end position="285"/>
    </location>
</feature>
<feature type="chain" id="PRO_0000261520" description="Envelope protein E" evidence="7">
    <location>
        <begin position="286"/>
        <end position="778"/>
    </location>
</feature>
<feature type="chain" id="PRO_0000261521" description="Non-structural protein 1" evidence="2">
    <location>
        <begin position="779"/>
        <end position="1130"/>
    </location>
</feature>
<feature type="chain" id="PRO_0000261522" description="Non-structural protein 2A" evidence="7">
    <location>
        <begin position="1131"/>
        <end position="1354"/>
    </location>
</feature>
<feature type="chain" id="PRO_0000261523" description="Non-structural protein 2A-alpha" evidence="7">
    <location>
        <begin position="1131"/>
        <end position="1320"/>
    </location>
</feature>
<feature type="chain" id="PRO_0000261524" description="Serine protease subunit NS2B" evidence="2">
    <location>
        <begin position="1355"/>
        <end position="1484"/>
    </location>
</feature>
<feature type="chain" id="PRO_0000261525" description="Serine protease NS3" evidence="2">
    <location>
        <begin position="1485"/>
        <end position="2107"/>
    </location>
</feature>
<feature type="chain" id="PRO_0000261526" description="Non-structural protein 4A" evidence="2">
    <location>
        <begin position="2108"/>
        <end position="2233"/>
    </location>
</feature>
<feature type="peptide" id="PRO_0000261527" description="Peptide 2k" evidence="2">
    <location>
        <begin position="2234"/>
        <end position="2256"/>
    </location>
</feature>
<feature type="chain" id="PRO_0000261528" description="Non-structural protein 4B" evidence="2">
    <location>
        <begin position="2257"/>
        <end position="2506"/>
    </location>
</feature>
<feature type="chain" id="PRO_0000261529" description="RNA-directed RNA polymerase NS5" evidence="2">
    <location>
        <begin position="2507"/>
        <end position="3411"/>
    </location>
</feature>
<feature type="topological domain" description="Cytoplasmic" evidence="11">
    <location>
        <begin position="1"/>
        <end position="104"/>
    </location>
</feature>
<feature type="transmembrane region" description="Helical" evidence="11">
    <location>
        <begin position="105"/>
        <end position="125"/>
    </location>
</feature>
<feature type="topological domain" description="Extracellular" evidence="11">
    <location>
        <begin position="126"/>
        <end position="244"/>
    </location>
</feature>
<feature type="transmembrane region" description="Helical" evidence="11">
    <location>
        <begin position="245"/>
        <end position="265"/>
    </location>
</feature>
<feature type="topological domain" description="Cytoplasmic" evidence="11">
    <location>
        <begin position="266"/>
        <end position="270"/>
    </location>
</feature>
<feature type="transmembrane region" description="Helical" evidence="11">
    <location>
        <begin position="271"/>
        <end position="285"/>
    </location>
</feature>
<feature type="topological domain" description="Extracellular" evidence="11">
    <location>
        <begin position="286"/>
        <end position="730"/>
    </location>
</feature>
<feature type="transmembrane region" description="Helical" evidence="11">
    <location>
        <begin position="731"/>
        <end position="751"/>
    </location>
</feature>
<feature type="topological domain" description="Extracellular" evidence="11">
    <location>
        <begin position="752"/>
        <end position="757"/>
    </location>
</feature>
<feature type="transmembrane region" description="Helical" evidence="11">
    <location>
        <begin position="758"/>
        <end position="778"/>
    </location>
</feature>
<feature type="topological domain" description="Extracellular" evidence="2">
    <location>
        <begin position="779"/>
        <end position="1132"/>
    </location>
</feature>
<feature type="transmembrane region" description="Helical" evidence="2">
    <location>
        <begin position="1133"/>
        <end position="1153"/>
    </location>
</feature>
<feature type="topological domain" description="Cytoplasmic" evidence="2">
    <location>
        <begin position="1154"/>
        <end position="1201"/>
    </location>
</feature>
<feature type="transmembrane region" description="Helical" evidence="2">
    <location>
        <begin position="1202"/>
        <end position="1222"/>
    </location>
</feature>
<feature type="topological domain" description="Lumenal" evidence="2">
    <location>
        <begin position="1223"/>
        <end position="1287"/>
    </location>
</feature>
<feature type="transmembrane region" description="Helical" evidence="2">
    <location>
        <begin position="1288"/>
        <end position="1308"/>
    </location>
</feature>
<feature type="topological domain" description="Cytoplasmic" evidence="2">
    <location>
        <begin position="1309"/>
        <end position="1355"/>
    </location>
</feature>
<feature type="transmembrane region" description="Helical" evidence="2">
    <location>
        <begin position="1356"/>
        <end position="1376"/>
    </location>
</feature>
<feature type="topological domain" description="Lumenal" evidence="2">
    <location>
        <begin position="1377"/>
        <end position="1378"/>
    </location>
</feature>
<feature type="transmembrane region" description="Helical" evidence="11">
    <location>
        <begin position="1379"/>
        <end position="1399"/>
    </location>
</feature>
<feature type="topological domain" description="Cytoplasmic" evidence="11">
    <location>
        <begin position="1400"/>
        <end position="1456"/>
    </location>
</feature>
<feature type="intramembrane region" description="Helical" evidence="11">
    <location>
        <begin position="1457"/>
        <end position="1477"/>
    </location>
</feature>
<feature type="topological domain" description="Cytoplasmic" evidence="11">
    <location>
        <begin position="1478"/>
        <end position="2157"/>
    </location>
</feature>
<feature type="transmembrane region" description="Helical" evidence="11">
    <location>
        <begin position="2158"/>
        <end position="2178"/>
    </location>
</feature>
<feature type="topological domain" description="Lumenal" evidence="11">
    <location>
        <begin position="2179"/>
        <end position="2186"/>
    </location>
</feature>
<feature type="intramembrane region" description="Helical" evidence="11">
    <location>
        <begin position="2187"/>
        <end position="2207"/>
    </location>
</feature>
<feature type="topological domain" description="Lumenal" evidence="11">
    <location>
        <begin position="2208"/>
        <end position="2209"/>
    </location>
</feature>
<feature type="transmembrane region" description="Helical" evidence="11">
    <location>
        <begin position="2210"/>
        <end position="2230"/>
    </location>
</feature>
<feature type="topological domain" description="Cytoplasmic" evidence="11">
    <location>
        <begin position="2231"/>
        <end position="2241"/>
    </location>
</feature>
<feature type="transmembrane region" description="Helical; Note=Signal for NS4B" evidence="11">
    <location>
        <begin position="2242"/>
        <end position="2262"/>
    </location>
</feature>
<feature type="topological domain" description="Lumenal" evidence="11">
    <location>
        <begin position="2263"/>
        <end position="2293"/>
    </location>
</feature>
<feature type="intramembrane region" description="Helical" evidence="11">
    <location>
        <begin position="2294"/>
        <end position="2314"/>
    </location>
</feature>
<feature type="topological domain" description="Lumenal" evidence="11">
    <location>
        <begin position="2315"/>
        <end position="2360"/>
    </location>
</feature>
<feature type="transmembrane region" description="Helical" evidence="11">
    <location>
        <begin position="2361"/>
        <end position="2380"/>
    </location>
</feature>
<feature type="topological domain" description="Cytoplasmic" evidence="11">
    <location>
        <begin position="2381"/>
        <end position="2421"/>
    </location>
</feature>
<feature type="transmembrane region" description="Helical" evidence="11">
    <location>
        <begin position="2422"/>
        <end position="2442"/>
    </location>
</feature>
<feature type="topological domain" description="Lumenal" evidence="11">
    <location>
        <begin position="2443"/>
        <end position="2445"/>
    </location>
</feature>
<feature type="transmembrane region" description="Helical" evidence="11">
    <location>
        <begin position="2446"/>
        <end position="2466"/>
    </location>
</feature>
<feature type="topological domain" description="Cytoplasmic" evidence="11">
    <location>
        <begin position="2467"/>
        <end position="3411"/>
    </location>
</feature>
<feature type="domain" description="Peptidase S7" evidence="15">
    <location>
        <begin position="1485"/>
        <end position="1665"/>
    </location>
</feature>
<feature type="domain" description="Helicase ATP-binding" evidence="13">
    <location>
        <begin position="1669"/>
        <end position="1825"/>
    </location>
</feature>
<feature type="domain" description="Helicase C-terminal">
    <location>
        <begin position="1820"/>
        <end position="1997"/>
    </location>
</feature>
<feature type="domain" description="mRNA cap 0-1 NS5-type MT" evidence="16">
    <location>
        <begin position="2507"/>
        <end position="2771"/>
    </location>
</feature>
<feature type="domain" description="RdRp catalytic" evidence="12">
    <location>
        <begin position="3035"/>
        <end position="3187"/>
    </location>
</feature>
<feature type="region of interest" description="Hydrophobic; homodimerization of capsid protein C" evidence="7">
    <location>
        <begin position="38"/>
        <end position="72"/>
    </location>
</feature>
<feature type="region of interest" description="Fusion peptide" evidence="4">
    <location>
        <begin position="383"/>
        <end position="396"/>
    </location>
</feature>
<feature type="region of interest" description="Interacts with and activates NS3 protease" evidence="14">
    <location>
        <begin position="1407"/>
        <end position="1446"/>
    </location>
</feature>
<feature type="region of interest" description="Important for RNA-binding" evidence="5">
    <location>
        <begin position="1673"/>
        <end position="1676"/>
    </location>
</feature>
<feature type="region of interest" description="Disordered" evidence="17">
    <location>
        <begin position="1942"/>
        <end position="1961"/>
    </location>
</feature>
<feature type="short sequence motif" description="DEAH box" evidence="13">
    <location>
        <begin position="1773"/>
        <end position="1776"/>
    </location>
</feature>
<feature type="short sequence motif" description="Nuclear localization signal" evidence="1">
    <location>
        <begin position="2878"/>
        <end position="2911"/>
    </location>
</feature>
<feature type="active site" description="Charge relay system; for serine protease NS3 activity" evidence="15">
    <location>
        <position position="1537"/>
    </location>
</feature>
<feature type="active site" description="Charge relay system; for serine protease NS3 activity" evidence="15">
    <location>
        <position position="1561"/>
    </location>
</feature>
<feature type="active site" description="Charge relay system; for serine protease NS3 activity" evidence="15">
    <location>
        <position position="1622"/>
    </location>
</feature>
<feature type="active site" description="For 2'-O-MTase activity" evidence="9">
    <location>
        <position position="2567"/>
    </location>
</feature>
<feature type="active site" description="For 2'-O-MTase activity" evidence="9">
    <location>
        <position position="2652"/>
    </location>
</feature>
<feature type="active site" description="For 2'-O-MTase activity" evidence="9">
    <location>
        <position position="2688"/>
    </location>
</feature>
<feature type="active site" description="For 2'-O-MTase activity" evidence="9">
    <location>
        <position position="2724"/>
    </location>
</feature>
<feature type="binding site" evidence="13">
    <location>
        <begin position="1682"/>
        <end position="1689"/>
    </location>
    <ligand>
        <name>ATP</name>
        <dbReference type="ChEBI" id="CHEBI:30616"/>
    </ligand>
</feature>
<feature type="binding site" evidence="16">
    <location>
        <position position="2562"/>
    </location>
    <ligand>
        <name>S-adenosyl-L-methionine</name>
        <dbReference type="ChEBI" id="CHEBI:59789"/>
    </ligand>
</feature>
<feature type="binding site" evidence="16">
    <location>
        <position position="2592"/>
    </location>
    <ligand>
        <name>S-adenosyl-L-methionine</name>
        <dbReference type="ChEBI" id="CHEBI:59789"/>
    </ligand>
</feature>
<feature type="binding site" evidence="16">
    <location>
        <position position="2593"/>
    </location>
    <ligand>
        <name>S-adenosyl-L-methionine</name>
        <dbReference type="ChEBI" id="CHEBI:59789"/>
    </ligand>
</feature>
<feature type="binding site" evidence="16">
    <location>
        <position position="2610"/>
    </location>
    <ligand>
        <name>S-adenosyl-L-methionine</name>
        <dbReference type="ChEBI" id="CHEBI:59789"/>
    </ligand>
</feature>
<feature type="binding site" evidence="16">
    <location>
        <position position="2611"/>
    </location>
    <ligand>
        <name>S-adenosyl-L-methionine</name>
        <dbReference type="ChEBI" id="CHEBI:59789"/>
    </ligand>
</feature>
<feature type="binding site" evidence="16">
    <location>
        <position position="2637"/>
    </location>
    <ligand>
        <name>S-adenosyl-L-methionine</name>
        <dbReference type="ChEBI" id="CHEBI:59789"/>
    </ligand>
</feature>
<feature type="binding site" evidence="16">
    <location>
        <position position="2638"/>
    </location>
    <ligand>
        <name>S-adenosyl-L-methionine</name>
        <dbReference type="ChEBI" id="CHEBI:59789"/>
    </ligand>
</feature>
<feature type="binding site" evidence="16">
    <location>
        <position position="2653"/>
    </location>
    <ligand>
        <name>S-adenosyl-L-methionine</name>
        <dbReference type="ChEBI" id="CHEBI:59789"/>
    </ligand>
</feature>
<feature type="binding site" evidence="16">
    <location>
        <position position="2726"/>
    </location>
    <ligand>
        <name>S-adenosyl-L-methionine</name>
        <dbReference type="ChEBI" id="CHEBI:59789"/>
    </ligand>
</feature>
<feature type="binding site" evidence="3">
    <location>
        <position position="2945"/>
    </location>
    <ligand>
        <name>Zn(2+)</name>
        <dbReference type="ChEBI" id="CHEBI:29105"/>
        <label>1</label>
    </ligand>
</feature>
<feature type="binding site" evidence="3">
    <location>
        <position position="2949"/>
    </location>
    <ligand>
        <name>Zn(2+)</name>
        <dbReference type="ChEBI" id="CHEBI:29105"/>
        <label>1</label>
    </ligand>
</feature>
<feature type="binding site" evidence="3">
    <location>
        <position position="2954"/>
    </location>
    <ligand>
        <name>Zn(2+)</name>
        <dbReference type="ChEBI" id="CHEBI:29105"/>
        <label>1</label>
    </ligand>
</feature>
<feature type="binding site" evidence="3">
    <location>
        <position position="2957"/>
    </location>
    <ligand>
        <name>Zn(2+)</name>
        <dbReference type="ChEBI" id="CHEBI:29105"/>
        <label>1</label>
    </ligand>
</feature>
<feature type="binding site" evidence="3">
    <location>
        <position position="3222"/>
    </location>
    <ligand>
        <name>Zn(2+)</name>
        <dbReference type="ChEBI" id="CHEBI:29105"/>
        <label>2</label>
    </ligand>
</feature>
<feature type="binding site" evidence="3">
    <location>
        <position position="3238"/>
    </location>
    <ligand>
        <name>Zn(2+)</name>
        <dbReference type="ChEBI" id="CHEBI:29105"/>
        <label>2</label>
    </ligand>
</feature>
<feature type="binding site" evidence="3">
    <location>
        <position position="3357"/>
    </location>
    <ligand>
        <name>Zn(2+)</name>
        <dbReference type="ChEBI" id="CHEBI:29105"/>
        <label>2</label>
    </ligand>
</feature>
<feature type="site" description="Cleavage; by viral protease NS3" evidence="2">
    <location>
        <begin position="101"/>
        <end position="102"/>
    </location>
</feature>
<feature type="site" description="Cleavage; by host signal peptidase" evidence="2">
    <location>
        <begin position="121"/>
        <end position="122"/>
    </location>
</feature>
<feature type="site" description="Cleavage; by host furin" evidence="7">
    <location>
        <begin position="210"/>
        <end position="211"/>
    </location>
</feature>
<feature type="site" description="Cleavage; by host signal peptidase" evidence="7">
    <location>
        <begin position="285"/>
        <end position="286"/>
    </location>
</feature>
<feature type="site" description="Cleavage; by host signal peptidase" evidence="2">
    <location>
        <begin position="778"/>
        <end position="779"/>
    </location>
</feature>
<feature type="site" description="Cleavage; by host" evidence="7">
    <location>
        <begin position="1130"/>
        <end position="1131"/>
    </location>
</feature>
<feature type="site" description="Cleavage; by viral protease NS3" evidence="7">
    <location>
        <begin position="1354"/>
        <end position="1355"/>
    </location>
</feature>
<feature type="site" description="Cleavage; by autolysis" evidence="2">
    <location>
        <begin position="1484"/>
        <end position="1485"/>
    </location>
</feature>
<feature type="site" description="Involved in NS3 ATPase and RTPase activities" evidence="3">
    <location>
        <position position="1945"/>
    </location>
</feature>
<feature type="site" description="Involved in NS3 ATPase and RTPase activities" evidence="3">
    <location>
        <position position="1948"/>
    </location>
</feature>
<feature type="site" description="Cleavage; by autolysis" evidence="2">
    <location>
        <begin position="2107"/>
        <end position="2108"/>
    </location>
</feature>
<feature type="site" description="Cleavage; by viral protease NS3" evidence="7">
    <location>
        <begin position="2233"/>
        <end position="2234"/>
    </location>
</feature>
<feature type="site" description="Cleavage; by host signal peptidase" evidence="7">
    <location>
        <begin position="2256"/>
        <end position="2257"/>
    </location>
</feature>
<feature type="site" description="Cleavage; by viral protease NS3" evidence="2">
    <location>
        <begin position="2506"/>
        <end position="2507"/>
    </location>
</feature>
<feature type="site" description="mRNA cap binding" evidence="16">
    <location>
        <position position="2519"/>
    </location>
</feature>
<feature type="site" description="mRNA cap binding; via carbonyl oxygen" evidence="16">
    <location>
        <position position="2522"/>
    </location>
</feature>
<feature type="site" description="mRNA cap binding" evidence="16">
    <location>
        <position position="2523"/>
    </location>
</feature>
<feature type="site" description="mRNA cap binding; via carbonyl oxygen" evidence="16">
    <location>
        <position position="2525"/>
    </location>
</feature>
<feature type="site" description="mRNA cap binding" evidence="16">
    <location>
        <position position="2530"/>
    </location>
</feature>
<feature type="site" description="mRNA cap binding" evidence="16">
    <location>
        <position position="2534"/>
    </location>
</feature>
<feature type="site" description="Essential for 2'-O-methyltransferase activity" evidence="16">
    <location>
        <position position="2567"/>
    </location>
</feature>
<feature type="site" description="Essential for 2'-O-methyltransferase and N-7 methyltransferase activity" evidence="16">
    <location>
        <position position="2652"/>
    </location>
</feature>
<feature type="site" description="mRNA cap binding" evidence="16">
    <location>
        <position position="2656"/>
    </location>
</feature>
<feature type="site" description="Essential for 2'-O-methyltransferase activity" evidence="16">
    <location>
        <position position="2688"/>
    </location>
</feature>
<feature type="site" description="mRNA cap binding" evidence="16">
    <location>
        <position position="2719"/>
    </location>
</feature>
<feature type="site" description="mRNA cap binding" evidence="16">
    <location>
        <position position="2721"/>
    </location>
</feature>
<feature type="site" description="Essential for 2'-O-methyltransferase activity" evidence="16">
    <location>
        <position position="2724"/>
    </location>
</feature>
<feature type="modified residue" description="N6-acetyllysine; by host" evidence="8">
    <location>
        <position position="1877"/>
    </location>
</feature>
<feature type="modified residue" description="Phosphoserine" evidence="2">
    <location>
        <position position="2562"/>
    </location>
</feature>
<feature type="glycosylation site" description="N-linked (GlcNAc...) asparagine; by host" evidence="11">
    <location>
        <position position="134"/>
    </location>
</feature>
<feature type="glycosylation site" description="N-linked (GlcNAc...) asparagine; by host" evidence="11">
    <location>
        <position position="150"/>
    </location>
</feature>
<feature type="glycosylation site" description="N-linked (GlcNAc...) asparagine; by host" evidence="11">
    <location>
        <position position="908"/>
    </location>
</feature>
<feature type="glycosylation site" description="N-linked (GlcNAc...) asparagine; by host" evidence="11">
    <location>
        <position position="986"/>
    </location>
</feature>
<feature type="disulfide bond" evidence="6">
    <location>
        <begin position="288"/>
        <end position="315"/>
    </location>
</feature>
<feature type="disulfide bond" evidence="6">
    <location>
        <begin position="345"/>
        <end position="406"/>
    </location>
</feature>
<feature type="disulfide bond" evidence="1">
    <location>
        <begin position="345"/>
        <end position="401"/>
    </location>
</feature>
<feature type="disulfide bond" evidence="6">
    <location>
        <begin position="359"/>
        <end position="390"/>
    </location>
</feature>
<feature type="disulfide bond" evidence="1">
    <location>
        <begin position="377"/>
        <end position="406"/>
    </location>
</feature>
<feature type="disulfide bond" evidence="6">
    <location>
        <begin position="377"/>
        <end position="401"/>
    </location>
</feature>
<feature type="disulfide bond" evidence="6">
    <location>
        <begin position="467"/>
        <end position="568"/>
    </location>
</feature>
<feature type="disulfide bond" evidence="6">
    <location>
        <begin position="585"/>
        <end position="615"/>
    </location>
</feature>
<feature type="disulfide bond" evidence="6">
    <location>
        <begin position="782"/>
        <end position="793"/>
    </location>
</feature>
<feature type="disulfide bond" evidence="6">
    <location>
        <begin position="833"/>
        <end position="921"/>
    </location>
</feature>
<feature type="disulfide bond" evidence="6">
    <location>
        <begin position="957"/>
        <end position="1002"/>
    </location>
</feature>
<feature type="disulfide bond" evidence="6">
    <location>
        <begin position="1058"/>
        <end position="1107"/>
    </location>
</feature>
<feature type="disulfide bond" evidence="6">
    <location>
        <begin position="1069"/>
        <end position="1091"/>
    </location>
</feature>
<feature type="disulfide bond" evidence="6">
    <location>
        <begin position="1090"/>
        <end position="1094"/>
    </location>
</feature>
<organism>
    <name type="scientific">Yellow fever virus (strain French neurotropic vaccine FNV)</name>
    <name type="common">YFV</name>
    <dbReference type="NCBI Taxonomy" id="407135"/>
    <lineage>
        <taxon>Viruses</taxon>
        <taxon>Riboviria</taxon>
        <taxon>Orthornavirae</taxon>
        <taxon>Kitrinoviricota</taxon>
        <taxon>Flasuviricetes</taxon>
        <taxon>Amarillovirales</taxon>
        <taxon>Flaviviridae</taxon>
        <taxon>Orthoflavivirus</taxon>
        <taxon>Orthoflavivirus flavi</taxon>
    </lineage>
</organism>
<proteinExistence type="inferred from homology"/>
<keyword id="KW-0007">Acetylation</keyword>
<keyword id="KW-1072">Activation of host autophagy by virus</keyword>
<keyword id="KW-0067">ATP-binding</keyword>
<keyword id="KW-0167">Capsid protein</keyword>
<keyword id="KW-1165">Clathrin-mediated endocytosis of virus by host</keyword>
<keyword id="KW-0165">Cleavage on pair of basic residues</keyword>
<keyword id="KW-1015">Disulfide bond</keyword>
<keyword id="KW-1170">Fusion of virus membrane with host endosomal membrane</keyword>
<keyword id="KW-1168">Fusion of virus membrane with host membrane</keyword>
<keyword id="KW-0325">Glycoprotein</keyword>
<keyword id="KW-0342">GTP-binding</keyword>
<keyword id="KW-0347">Helicase</keyword>
<keyword id="KW-1035">Host cytoplasm</keyword>
<keyword id="KW-1038">Host endoplasmic reticulum</keyword>
<keyword id="KW-1043">Host membrane</keyword>
<keyword id="KW-1048">Host nucleus</keyword>
<keyword id="KW-0945">Host-virus interaction</keyword>
<keyword id="KW-0378">Hydrolase</keyword>
<keyword id="KW-1090">Inhibition of host innate immune response by virus</keyword>
<keyword id="KW-1114">Inhibition of host interferon signaling pathway by virus</keyword>
<keyword id="KW-1106">Inhibition of host STAT2 by virus</keyword>
<keyword id="KW-0922">Interferon antiviral system evasion</keyword>
<keyword id="KW-0472">Membrane</keyword>
<keyword id="KW-0479">Metal-binding</keyword>
<keyword id="KW-0489">Methyltransferase</keyword>
<keyword id="KW-0506">mRNA capping</keyword>
<keyword id="KW-0507">mRNA processing</keyword>
<keyword id="KW-0511">Multifunctional enzyme</keyword>
<keyword id="KW-0547">Nucleotide-binding</keyword>
<keyword id="KW-0548">Nucleotidyltransferase</keyword>
<keyword id="KW-0597">Phosphoprotein</keyword>
<keyword id="KW-0645">Protease</keyword>
<keyword id="KW-0694">RNA-binding</keyword>
<keyword id="KW-0696">RNA-directed RNA polymerase</keyword>
<keyword id="KW-0949">S-adenosyl-L-methionine</keyword>
<keyword id="KW-0964">Secreted</keyword>
<keyword id="KW-0720">Serine protease</keyword>
<keyword id="KW-0941">Suppressor of RNA silencing</keyword>
<keyword id="KW-0804">Transcription</keyword>
<keyword id="KW-0805">Transcription regulation</keyword>
<keyword id="KW-0808">Transferase</keyword>
<keyword id="KW-0812">Transmembrane</keyword>
<keyword id="KW-1133">Transmembrane helix</keyword>
<keyword id="KW-0832">Ubl conjugation</keyword>
<keyword id="KW-1161">Viral attachment to host cell</keyword>
<keyword id="KW-0261">Viral envelope protein</keyword>
<keyword id="KW-0899">Viral immunoevasion</keyword>
<keyword id="KW-1162">Viral penetration into host cytoplasm</keyword>
<keyword id="KW-0693">Viral RNA replication</keyword>
<keyword id="KW-0946">Virion</keyword>
<keyword id="KW-1164">Virus endocytosis by host</keyword>
<keyword id="KW-1160">Virus entry into host cell</keyword>
<keyword id="KW-0862">Zinc</keyword>
<evidence type="ECO:0000250" key="1"/>
<evidence type="ECO:0000250" key="2">
    <source>
        <dbReference type="UniProtKB" id="P03314"/>
    </source>
</evidence>
<evidence type="ECO:0000250" key="3">
    <source>
        <dbReference type="UniProtKB" id="P14335"/>
    </source>
</evidence>
<evidence type="ECO:0000250" key="4">
    <source>
        <dbReference type="UniProtKB" id="P14336"/>
    </source>
</evidence>
<evidence type="ECO:0000250" key="5">
    <source>
        <dbReference type="UniProtKB" id="P14340"/>
    </source>
</evidence>
<evidence type="ECO:0000250" key="6">
    <source>
        <dbReference type="UniProtKB" id="P17763"/>
    </source>
</evidence>
<evidence type="ECO:0000250" key="7">
    <source>
        <dbReference type="UniProtKB" id="P29990"/>
    </source>
</evidence>
<evidence type="ECO:0000250" key="8">
    <source>
        <dbReference type="UniProtKB" id="Q32ZE1"/>
    </source>
</evidence>
<evidence type="ECO:0000250" key="9">
    <source>
        <dbReference type="UniProtKB" id="Q6YMS4"/>
    </source>
</evidence>
<evidence type="ECO:0000250" key="10">
    <source>
        <dbReference type="UniProtKB" id="Q9Q6P4"/>
    </source>
</evidence>
<evidence type="ECO:0000255" key="11"/>
<evidence type="ECO:0000255" key="12">
    <source>
        <dbReference type="PROSITE-ProRule" id="PRU00539"/>
    </source>
</evidence>
<evidence type="ECO:0000255" key="13">
    <source>
        <dbReference type="PROSITE-ProRule" id="PRU00541"/>
    </source>
</evidence>
<evidence type="ECO:0000255" key="14">
    <source>
        <dbReference type="PROSITE-ProRule" id="PRU00859"/>
    </source>
</evidence>
<evidence type="ECO:0000255" key="15">
    <source>
        <dbReference type="PROSITE-ProRule" id="PRU00860"/>
    </source>
</evidence>
<evidence type="ECO:0000255" key="16">
    <source>
        <dbReference type="PROSITE-ProRule" id="PRU00924"/>
    </source>
</evidence>
<evidence type="ECO:0000256" key="17">
    <source>
        <dbReference type="SAM" id="MobiDB-lite"/>
    </source>
</evidence>
<evidence type="ECO:0000305" key="18"/>
<accession>Q89277</accession>
<reference key="1">
    <citation type="journal article" date="1995" name="J. Gen. Virol.">
        <title>Comparison of the genomes of the wild-type French viscerotropic strain of yellow fever virus with its vaccine derivative French neurotropic vaccine.</title>
        <authorList>
            <person name="Wang E."/>
            <person name="Ryman K.D."/>
            <person name="Jennings A.D."/>
            <person name="Wood D.J."/>
            <person name="Taffs F."/>
            <person name="Minor P.D."/>
            <person name="Sanders P.G."/>
            <person name="Barrett A.D."/>
        </authorList>
    </citation>
    <scope>NUCLEOTIDE SEQUENCE [GENOMIC RNA]</scope>
</reference>
<comment type="function">
    <molecule>Capsid protein C</molecule>
    <text evidence="6">Plays a role in virus budding by binding to the cell membrane and gathering the viral RNA into a nucleocapsid that forms the core of a mature virus particle. During virus entry, may induce genome penetration into the host cytoplasm after hemifusion induced by the surface proteins. Can migrate to the cell nucleus where it modulates host functions.</text>
</comment>
<comment type="function">
    <molecule>Capsid protein C</molecule>
    <text evidence="2">Inhibits RNA silencing by interfering with host Dicer.</text>
</comment>
<comment type="function">
    <molecule>Peptide pr</molecule>
    <text evidence="6">Prevents premature fusion activity of envelope proteins in trans-Golgi by binding to envelope protein E at pH6.0. After virion release in extracellular space, gets dissociated from E dimers.</text>
</comment>
<comment type="function">
    <molecule>Protein prM</molecule>
    <text evidence="6">Acts as a chaperone for envelope protein E during intracellular virion assembly by masking and inactivating envelope protein E fusion peptide. prM is the only viral peptide matured by host furin in the trans-Golgi network probably to avoid catastrophic activation of the viral fusion activity in acidic Golgi compartment prior to virion release. prM-E cleavage is inefficient, and many virions are only partially matured. These uncleaved prM would play a role in immune evasion.</text>
</comment>
<comment type="function">
    <molecule>Small envelope protein M</molecule>
    <text evidence="6">May play a role in virus budding. Exerts cytotoxic effects by activating a mitochondrial apoptotic pathway through M ectodomain. May display a viroporin activity.</text>
</comment>
<comment type="function">
    <molecule>Envelope protein E</molecule>
    <text evidence="6">Binds to host cell surface receptor and mediates fusion between viral and cellular membranes. Envelope protein is synthesized in the endoplasmic reticulum in the form of heterodimer with protein prM. They play a role in virion budding in the ER, and the newly formed immature particle is covered with 60 spikes composed of heterodimer between precursor prM and envelope protein E. The virion is transported to the Golgi apparatus where the low pH causes dissociation of PrM-E heterodimers and formation of E homodimers. prM-E cleavage is inefficient, and many virions are only partially matured. These uncleaved prM would play a role in immune evasion.</text>
</comment>
<comment type="function">
    <molecule>Non-structural protein 1</molecule>
    <text evidence="10">Involved in immune evasion, pathogenesis and viral replication. Once cleaved off the polyprotein, is targeted to three destinations: the viral replication cycle, the plasma membrane and the extracellular compartment. Essential for viral replication. Required for formation of the replication complex and recruitment of other non-structural proteins to the ER-derived membrane structures. Excreted as a hexameric lipoparticle that plays a role against host immune response. Antagonizing the complement function. Binds to the host macrophages and dendritic cells. Inhibits signal transduction originating from Toll-like receptor 3 (TLR3).</text>
</comment>
<comment type="function">
    <molecule>Non-structural protein 2A</molecule>
    <text evidence="6">Component of the viral RNA replication complex that functions in virion assembly and antagonizes the host immune response.</text>
</comment>
<comment type="function">
    <molecule>Serine protease subunit NS2B</molecule>
    <text evidence="6 14">Required cofactor for the serine protease function of NS3. May have membrane-destabilizing activity and form viroporins (By similarity).</text>
</comment>
<comment type="function">
    <molecule>Serine protease NS3</molecule>
    <text evidence="2 15">Displays three enzymatic activities: serine protease, NTPase and RNA helicase. NS3 serine protease, in association with NS2B, performs its autocleavage and cleaves the polyprotein at dibasic sites in the cytoplasm: C-prM, NS2A-NS2B, NS2B-NS3, NS3-NS4A, NS4A-2K and NS4B-NS5. NS3 RNA helicase binds RNA and unwinds dsRNA in the 3' to 5' direction. Also plays a role in virus assembly (By similarity).</text>
</comment>
<comment type="function">
    <molecule>Non-structural protein 4A</molecule>
    <text evidence="10">Regulates the ATPase activity of the NS3 helicase activity. NS4A allows NS3 helicase to conserve energy during unwinding.</text>
</comment>
<comment type="function">
    <molecule>Peptide 2k</molecule>
    <text evidence="6">Functions as a signal peptide for NS4B and is required for the interferon antagonism activity of the latter.</text>
</comment>
<comment type="function">
    <molecule>Non-structural protein 4B</molecule>
    <text evidence="10">Induces the formation of ER-derived membrane vesicles where the viral replication takes place. Inhibits interferon (IFN)-induced host STAT1 phosphorylation and nuclear translocation, thereby preventing the establishment of cellular antiviral state by blocking the IFN-alpha/beta pathway.</text>
</comment>
<comment type="function">
    <molecule>RNA-directed RNA polymerase NS5</molecule>
    <text evidence="2">Replicates the viral (+) and (-) RNA genome, and performs the capping of genomes in the cytoplasm. NS5 methylates viral RNA cap at guanine N-7 and ribose 2'-O positions (By similarity). Besides its role in RNA genome replication, also prevents the establishment of cellular antiviral state by blocking the interferon-alpha/beta (IFN-alpha/beta) signaling pathway. IFN-I induces binding of NS5 to host IFN-activated transcription factor STAT2, preventing its transcriptional activity. Host TRIM23 is the E3 ligase that interacts with and polyubiquitinates NS5 to promote its binding to STAT2 and trigger IFN-I signaling inhibition.</text>
</comment>
<comment type="catalytic activity">
    <reaction>
        <text>Selective hydrolysis of -Xaa-Xaa-|-Yaa- bonds in which each of the Xaa can be either Arg or Lys and Yaa can be either Ser or Ala.</text>
        <dbReference type="EC" id="3.4.21.91"/>
    </reaction>
</comment>
<comment type="catalytic activity">
    <reaction evidence="12">
        <text>RNA(n) + a ribonucleoside 5'-triphosphate = RNA(n+1) + diphosphate</text>
        <dbReference type="Rhea" id="RHEA:21248"/>
        <dbReference type="Rhea" id="RHEA-COMP:14527"/>
        <dbReference type="Rhea" id="RHEA-COMP:17342"/>
        <dbReference type="ChEBI" id="CHEBI:33019"/>
        <dbReference type="ChEBI" id="CHEBI:61557"/>
        <dbReference type="ChEBI" id="CHEBI:140395"/>
        <dbReference type="EC" id="2.7.7.48"/>
    </reaction>
</comment>
<comment type="catalytic activity">
    <reaction>
        <text>a ribonucleoside 5'-triphosphate + H2O = a ribonucleoside 5'-diphosphate + phosphate + H(+)</text>
        <dbReference type="Rhea" id="RHEA:23680"/>
        <dbReference type="ChEBI" id="CHEBI:15377"/>
        <dbReference type="ChEBI" id="CHEBI:15378"/>
        <dbReference type="ChEBI" id="CHEBI:43474"/>
        <dbReference type="ChEBI" id="CHEBI:57930"/>
        <dbReference type="ChEBI" id="CHEBI:61557"/>
        <dbReference type="EC" id="3.6.1.15"/>
    </reaction>
</comment>
<comment type="catalytic activity">
    <reaction>
        <text>ATP + H2O = ADP + phosphate + H(+)</text>
        <dbReference type="Rhea" id="RHEA:13065"/>
        <dbReference type="ChEBI" id="CHEBI:15377"/>
        <dbReference type="ChEBI" id="CHEBI:15378"/>
        <dbReference type="ChEBI" id="CHEBI:30616"/>
        <dbReference type="ChEBI" id="CHEBI:43474"/>
        <dbReference type="ChEBI" id="CHEBI:456216"/>
        <dbReference type="EC" id="3.6.4.13"/>
    </reaction>
</comment>
<comment type="catalytic activity">
    <reaction evidence="16">
        <text>a 5'-end (5'-triphosphoguanosine)-ribonucleoside in mRNA + S-adenosyl-L-methionine = a 5'-end (N(7)-methyl 5'-triphosphoguanosine)-ribonucleoside in mRNA + S-adenosyl-L-homocysteine</text>
        <dbReference type="Rhea" id="RHEA:67008"/>
        <dbReference type="Rhea" id="RHEA-COMP:17166"/>
        <dbReference type="Rhea" id="RHEA-COMP:17167"/>
        <dbReference type="ChEBI" id="CHEBI:57856"/>
        <dbReference type="ChEBI" id="CHEBI:59789"/>
        <dbReference type="ChEBI" id="CHEBI:156461"/>
        <dbReference type="ChEBI" id="CHEBI:167617"/>
        <dbReference type="EC" id="2.1.1.56"/>
    </reaction>
</comment>
<comment type="catalytic activity">
    <reaction evidence="16">
        <text>a 5'-end (N(7)-methyl 5'-triphosphoguanosine)-ribonucleoside in mRNA + S-adenosyl-L-methionine = a 5'-end (N(7)-methyl 5'-triphosphoguanosine)-(2'-O-methyl-ribonucleoside) in mRNA + S-adenosyl-L-homocysteine + H(+)</text>
        <dbReference type="Rhea" id="RHEA:67020"/>
        <dbReference type="Rhea" id="RHEA-COMP:17167"/>
        <dbReference type="Rhea" id="RHEA-COMP:17168"/>
        <dbReference type="ChEBI" id="CHEBI:15378"/>
        <dbReference type="ChEBI" id="CHEBI:57856"/>
        <dbReference type="ChEBI" id="CHEBI:59789"/>
        <dbReference type="ChEBI" id="CHEBI:156461"/>
        <dbReference type="ChEBI" id="CHEBI:167609"/>
        <dbReference type="EC" id="2.1.1.57"/>
    </reaction>
</comment>
<comment type="subunit">
    <molecule>Capsid protein C</molecule>
    <text evidence="6">Homodimer (By similarity). Interacts (via N-terminus) with host EXOC1 (via C-terminus); this interaction results in EXOC1 degradation through the proteasome degradation pathway (By similarity).</text>
</comment>
<comment type="subunit">
    <molecule>Protein prM</molecule>
    <text evidence="6">Forms heterodimers with envelope protein E in the endoplasmic reticulum and Golgi.</text>
</comment>
<comment type="subunit">
    <molecule>Envelope protein E</molecule>
    <text evidence="6">Homodimer; in the endoplasmic reticulum and Golgi (By similarity). Interacts with protein prM (By similarity). Interacts with non-structural protein 1 (By similarity).</text>
</comment>
<comment type="subunit">
    <molecule>Non-structural protein 1</molecule>
    <text evidence="6">Homodimer; Homohexamer when secreted (By similarity). Interacts with envelope protein E (By similarity).</text>
</comment>
<comment type="subunit">
    <molecule>Non-structural protein 2A</molecule>
    <text evidence="2">Interacts (via N-terminus) with serine protease NS3.</text>
</comment>
<comment type="subunit">
    <molecule>Serine protease subunit NS2B</molecule>
    <text evidence="6">Forms a heterodimer with serine protease NS3 (By similarity). May form homooligomers (By similarity).</text>
</comment>
<comment type="subunit">
    <molecule>Serine protease NS3</molecule>
    <text evidence="6">Forms a heterodimer with NS2B (By similarity). Interacts with non-structural protein 2A (via N-terminus) (By similarity). Interacts with NS4B (By similarity). Interacts with unphosphorylated RNA-directed RNA polymerase NS5; this interaction stimulates RNA-directed RNA polymerase NS5 guanylyltransferase activity (By similarity). NS3 interacts with host PDCD6IP; this interaction contributes to virion release (By similarity).</text>
</comment>
<comment type="subunit">
    <molecule>Non-structural protein 4B</molecule>
    <text evidence="6">Interacts with serine protease NS3 (By similarity).</text>
</comment>
<comment type="subunit">
    <molecule>RNA-directed RNA polymerase NS5</molecule>
    <text evidence="2">Homodimer (By similarity). Interacts with host STAT2; this interaction prevents the establishment of cellular antiviral state (By similarity). Interacts with serine protease NS3 (By similarity). Interacts with host TRIM23; this interaction leads to NS5 ubiquitination (By similarity).</text>
</comment>
<comment type="subcellular location">
    <molecule>Capsid protein C</molecule>
    <subcellularLocation>
        <location evidence="6">Virion</location>
    </subcellularLocation>
    <subcellularLocation>
        <location evidence="6">Host nucleus</location>
    </subcellularLocation>
    <subcellularLocation>
        <location evidence="6">Host cytoplasm</location>
        <location evidence="6">Host perinuclear region</location>
    </subcellularLocation>
    <subcellularLocation>
        <location evidence="6">Host cytoplasm</location>
    </subcellularLocation>
</comment>
<comment type="subcellular location">
    <molecule>Peptide pr</molecule>
    <subcellularLocation>
        <location evidence="6">Secreted</location>
    </subcellularLocation>
</comment>
<comment type="subcellular location">
    <molecule>Small envelope protein M</molecule>
    <subcellularLocation>
        <location evidence="2">Virion membrane</location>
        <topology evidence="2">Multi-pass membrane protein</topology>
    </subcellularLocation>
    <subcellularLocation>
        <location evidence="2">Host endoplasmic reticulum membrane</location>
        <topology evidence="11">Multi-pass membrane protein</topology>
    </subcellularLocation>
    <text evidence="2">ER membrane retention is mediated by the transmembrane domains.</text>
</comment>
<comment type="subcellular location">
    <molecule>Envelope protein E</molecule>
    <subcellularLocation>
        <location evidence="18">Virion membrane</location>
        <topology evidence="2">Multi-pass membrane protein</topology>
    </subcellularLocation>
    <subcellularLocation>
        <location evidence="2">Host endoplasmic reticulum membrane</location>
        <topology evidence="11">Multi-pass membrane protein</topology>
    </subcellularLocation>
    <text evidence="2">ER membrane retention is mediated by the transmembrane domains.</text>
</comment>
<comment type="subcellular location">
    <molecule>Non-structural protein 1</molecule>
    <subcellularLocation>
        <location evidence="6">Secreted</location>
    </subcellularLocation>
    <subcellularLocation>
        <location>Host endoplasmic reticulum membrane</location>
        <topology>Peripheral membrane protein</topology>
        <orientation evidence="6">Lumenal side</orientation>
    </subcellularLocation>
    <text evidence="10">Located in RE-derived vesicles hosting the replication complex.</text>
</comment>
<comment type="subcellular location">
    <molecule>Non-structural protein 2A</molecule>
    <subcellularLocation>
        <location evidence="6">Host endoplasmic reticulum membrane</location>
        <topology evidence="6">Multi-pass membrane protein</topology>
    </subcellularLocation>
</comment>
<comment type="subcellular location">
    <molecule>Serine protease subunit NS2B</molecule>
    <subcellularLocation>
        <location>Host endoplasmic reticulum membrane</location>
        <topology evidence="6">Multi-pass membrane protein</topology>
    </subcellularLocation>
</comment>
<comment type="subcellular location">
    <molecule>Serine protease NS3</molecule>
    <subcellularLocation>
        <location evidence="15">Host endoplasmic reticulum membrane</location>
        <topology evidence="15">Peripheral membrane protein</topology>
        <orientation evidence="15">Cytoplasmic side</orientation>
    </subcellularLocation>
    <text evidence="15">Remains non-covalently associated to serine protease subunit NS2B.</text>
</comment>
<comment type="subcellular location">
    <molecule>Non-structural protein 4A</molecule>
    <subcellularLocation>
        <location evidence="6">Host endoplasmic reticulum membrane</location>
        <topology evidence="6">Multi-pass membrane protein</topology>
    </subcellularLocation>
    <text evidence="6">Located in RE-associated vesicles hosting the replication complex.</text>
</comment>
<comment type="subcellular location">
    <molecule>Non-structural protein 4B</molecule>
    <subcellularLocation>
        <location evidence="6">Host endoplasmic reticulum membrane</location>
        <topology evidence="6">Multi-pass membrane protein</topology>
    </subcellularLocation>
    <text evidence="10">Located in RE-derived vesicles hosting the replication complex.</text>
</comment>
<comment type="subcellular location">
    <molecule>RNA-directed RNA polymerase NS5</molecule>
    <subcellularLocation>
        <location>Host endoplasmic reticulum membrane</location>
        <topology>Peripheral membrane protein</topology>
        <orientation>Cytoplasmic side</orientation>
    </subcellularLocation>
    <subcellularLocation>
        <location evidence="6">Host nucleus</location>
    </subcellularLocation>
    <text evidence="6">Located in RE-associated vesicles hosting the replication complex. NS5 protein is mainly localized in the nucleus rather than in ER vesicles.</text>
</comment>
<comment type="domain">
    <text evidence="6">The transmembrane domains of the small envelope protein M and envelope protein E contain an endoplasmic reticulum retention signal.</text>
</comment>
<comment type="PTM">
    <molecule>Genome polyprotein</molecule>
    <text evidence="2">Specific enzymatic cleavages in vivo yield mature proteins. The nascent capsid protein C contains a C-terminal hydrophobic domain that act as a signal sequence for translocation of prM into the lumen of the ER. Mature capsid protein C is cleaved at a site upstream of this hydrophobic domain by NS3. prM is cleaved in post-Golgi vesicles by a host furin, releasing the mature small envelope protein M, and peptide pr. Non-structural protein 2A-alpha, a C-terminally truncated form of non-structural protein 2A, results from partial cleavage by NS3. Specific enzymatic cleavages in vivo yield mature proteins peptide 2K acts as a signal sequence and is removed from the N-terminus of NS4B by the host signal peptidase in the ER lumen. Signal cleavage at the 2K-4B site requires a prior NS3 protease-mediated cleavage at the 4A-2K site.</text>
</comment>
<comment type="PTM">
    <molecule>Protein prM</molecule>
    <text evidence="6">Cleaved in post-Golgi vesicles by a host furin, releasing the mature small envelope protein M, and peptide pr. This cleavage is incomplete as up to 30% of viral particles still carry uncleaved prM.</text>
</comment>
<comment type="PTM">
    <molecule>Envelope protein E</molecule>
    <text evidence="6">N-glycosylated.</text>
</comment>
<comment type="PTM">
    <molecule>Non-structural protein 1</molecule>
    <text evidence="6">N-glycosylated. The excreted form is glycosylated and this is required for efficient secretion of the protein from infected cells.</text>
</comment>
<comment type="PTM">
    <text evidence="2">Polyubiquitinated; ubiquitination is probably mediated by host TRIM23 and is prerequisite for NS5-STAT2 interaction. NS5 is not ISGylated or sumoylated.</text>
</comment>
<comment type="PTM">
    <molecule>RNA-directed RNA polymerase NS5</molecule>
    <text evidence="6">Phosphorylated on serines residues. This phosphorylation may trigger NS5 nuclear localization.</text>
</comment>
<comment type="PTM">
    <molecule>Serine protease NS3</molecule>
    <text evidence="8">Acetylated by host KAT5. Acetylation modulates NS3 RNA-binding and -unwinding activities and plays an important role for viral replication.</text>
</comment>
<comment type="similarity">
    <text evidence="16">In the N-terminal section; belongs to the class I-like SAM-binding methyltransferase superfamily. mRNA cap 0-1 NS5-type methyltransferase family.</text>
</comment>
<organismHost>
    <name type="scientific">Aedes aegypti</name>
    <name type="common">Yellowfever mosquito</name>
    <name type="synonym">Culex aegypti</name>
    <dbReference type="NCBI Taxonomy" id="7159"/>
</organismHost>
<organismHost>
    <name type="scientific">Aedes luteocephalus</name>
    <name type="common">Mosquito</name>
    <dbReference type="NCBI Taxonomy" id="299629"/>
</organismHost>
<organismHost>
    <name type="scientific">Aedes simpsoni</name>
    <dbReference type="NCBI Taxonomy" id="7161"/>
</organismHost>
<organismHost>
    <name type="scientific">Homo sapiens</name>
    <name type="common">Human</name>
    <dbReference type="NCBI Taxonomy" id="9606"/>
</organismHost>
<organismHost>
    <name type="scientific">Simiiformes</name>
    <dbReference type="NCBI Taxonomy" id="314293"/>
</organismHost>
<dbReference type="EC" id="3.4.21.91"/>
<dbReference type="EC" id="3.6.1.15" evidence="10"/>
<dbReference type="EC" id="3.6.4.13" evidence="10"/>
<dbReference type="EC" id="2.1.1.56" evidence="16"/>
<dbReference type="EC" id="2.1.1.57" evidence="16"/>
<dbReference type="EC" id="2.7.7.48" evidence="12"/>
<dbReference type="EMBL" id="U21055">
    <property type="protein sequence ID" value="AAA99712.1"/>
    <property type="molecule type" value="Genomic_RNA"/>
</dbReference>
<dbReference type="SMR" id="Q89277"/>
<dbReference type="MEROPS" id="S07.001"/>
<dbReference type="Proteomes" id="UP000008605">
    <property type="component" value="Genome"/>
</dbReference>
<dbReference type="GO" id="GO:0005576">
    <property type="term" value="C:extracellular region"/>
    <property type="evidence" value="ECO:0007669"/>
    <property type="project" value="UniProtKB-SubCell"/>
</dbReference>
<dbReference type="GO" id="GO:0044167">
    <property type="term" value="C:host cell endoplasmic reticulum membrane"/>
    <property type="evidence" value="ECO:0007669"/>
    <property type="project" value="UniProtKB-SubCell"/>
</dbReference>
<dbReference type="GO" id="GO:0042025">
    <property type="term" value="C:host cell nucleus"/>
    <property type="evidence" value="ECO:0007669"/>
    <property type="project" value="UniProtKB-SubCell"/>
</dbReference>
<dbReference type="GO" id="GO:0044220">
    <property type="term" value="C:host cell perinuclear region of cytoplasm"/>
    <property type="evidence" value="ECO:0007669"/>
    <property type="project" value="UniProtKB-SubCell"/>
</dbReference>
<dbReference type="GO" id="GO:0016020">
    <property type="term" value="C:membrane"/>
    <property type="evidence" value="ECO:0007669"/>
    <property type="project" value="UniProtKB-KW"/>
</dbReference>
<dbReference type="GO" id="GO:0019028">
    <property type="term" value="C:viral capsid"/>
    <property type="evidence" value="ECO:0007669"/>
    <property type="project" value="UniProtKB-KW"/>
</dbReference>
<dbReference type="GO" id="GO:0019031">
    <property type="term" value="C:viral envelope"/>
    <property type="evidence" value="ECO:0007669"/>
    <property type="project" value="UniProtKB-KW"/>
</dbReference>
<dbReference type="GO" id="GO:0055036">
    <property type="term" value="C:virion membrane"/>
    <property type="evidence" value="ECO:0007669"/>
    <property type="project" value="UniProtKB-SubCell"/>
</dbReference>
<dbReference type="GO" id="GO:0005524">
    <property type="term" value="F:ATP binding"/>
    <property type="evidence" value="ECO:0007669"/>
    <property type="project" value="UniProtKB-KW"/>
</dbReference>
<dbReference type="GO" id="GO:0016887">
    <property type="term" value="F:ATP hydrolysis activity"/>
    <property type="evidence" value="ECO:0007669"/>
    <property type="project" value="RHEA"/>
</dbReference>
<dbReference type="GO" id="GO:0003725">
    <property type="term" value="F:double-stranded RNA binding"/>
    <property type="evidence" value="ECO:0007669"/>
    <property type="project" value="InterPro"/>
</dbReference>
<dbReference type="GO" id="GO:0005525">
    <property type="term" value="F:GTP binding"/>
    <property type="evidence" value="ECO:0007669"/>
    <property type="project" value="UniProtKB-KW"/>
</dbReference>
<dbReference type="GO" id="GO:0046872">
    <property type="term" value="F:metal ion binding"/>
    <property type="evidence" value="ECO:0007669"/>
    <property type="project" value="UniProtKB-KW"/>
</dbReference>
<dbReference type="GO" id="GO:0004483">
    <property type="term" value="F:mRNA (nucleoside-2'-O-)-methyltransferase activity"/>
    <property type="evidence" value="ECO:0007669"/>
    <property type="project" value="UniProtKB-EC"/>
</dbReference>
<dbReference type="GO" id="GO:0004482">
    <property type="term" value="F:mRNA 5'-cap (guanine-N7-)-methyltransferase activity"/>
    <property type="evidence" value="ECO:0007669"/>
    <property type="project" value="UniProtKB-EC"/>
</dbReference>
<dbReference type="GO" id="GO:0046983">
    <property type="term" value="F:protein dimerization activity"/>
    <property type="evidence" value="ECO:0007669"/>
    <property type="project" value="InterPro"/>
</dbReference>
<dbReference type="GO" id="GO:0003724">
    <property type="term" value="F:RNA helicase activity"/>
    <property type="evidence" value="ECO:0007669"/>
    <property type="project" value="UniProtKB-EC"/>
</dbReference>
<dbReference type="GO" id="GO:0003968">
    <property type="term" value="F:RNA-directed RNA polymerase activity"/>
    <property type="evidence" value="ECO:0007669"/>
    <property type="project" value="UniProtKB-KW"/>
</dbReference>
<dbReference type="GO" id="GO:0004252">
    <property type="term" value="F:serine-type endopeptidase activity"/>
    <property type="evidence" value="ECO:0007669"/>
    <property type="project" value="InterPro"/>
</dbReference>
<dbReference type="GO" id="GO:0005198">
    <property type="term" value="F:structural molecule activity"/>
    <property type="evidence" value="ECO:0007669"/>
    <property type="project" value="InterPro"/>
</dbReference>
<dbReference type="GO" id="GO:0075512">
    <property type="term" value="P:clathrin-dependent endocytosis of virus by host cell"/>
    <property type="evidence" value="ECO:0007669"/>
    <property type="project" value="UniProtKB-KW"/>
</dbReference>
<dbReference type="GO" id="GO:0039654">
    <property type="term" value="P:fusion of virus membrane with host endosome membrane"/>
    <property type="evidence" value="ECO:0007669"/>
    <property type="project" value="UniProtKB-KW"/>
</dbReference>
<dbReference type="GO" id="GO:0006508">
    <property type="term" value="P:proteolysis"/>
    <property type="evidence" value="ECO:0007669"/>
    <property type="project" value="UniProtKB-KW"/>
</dbReference>
<dbReference type="GO" id="GO:0039520">
    <property type="term" value="P:symbiont-mediated activation of host autophagy"/>
    <property type="evidence" value="ECO:0007669"/>
    <property type="project" value="UniProtKB-KW"/>
</dbReference>
<dbReference type="GO" id="GO:0052170">
    <property type="term" value="P:symbiont-mediated suppression of host innate immune response"/>
    <property type="evidence" value="ECO:0007669"/>
    <property type="project" value="UniProtKB-KW"/>
</dbReference>
<dbReference type="GO" id="GO:0039564">
    <property type="term" value="P:symbiont-mediated suppression of host JAK-STAT cascade via inhibition of STAT2 activity"/>
    <property type="evidence" value="ECO:0007669"/>
    <property type="project" value="UniProtKB-KW"/>
</dbReference>
<dbReference type="GO" id="GO:0039502">
    <property type="term" value="P:symbiont-mediated suppression of host type I interferon-mediated signaling pathway"/>
    <property type="evidence" value="ECO:0007669"/>
    <property type="project" value="UniProtKB-KW"/>
</dbReference>
<dbReference type="GO" id="GO:0039694">
    <property type="term" value="P:viral RNA genome replication"/>
    <property type="evidence" value="ECO:0007669"/>
    <property type="project" value="InterPro"/>
</dbReference>
<dbReference type="GO" id="GO:0019062">
    <property type="term" value="P:virion attachment to host cell"/>
    <property type="evidence" value="ECO:0007669"/>
    <property type="project" value="UniProtKB-KW"/>
</dbReference>
<dbReference type="CDD" id="cd20761">
    <property type="entry name" value="capping_2-OMTase_Flaviviridae"/>
    <property type="match status" value="1"/>
</dbReference>
<dbReference type="CDD" id="cd17931">
    <property type="entry name" value="DEXHc_viral_Ns3"/>
    <property type="match status" value="1"/>
</dbReference>
<dbReference type="CDD" id="cd12149">
    <property type="entry name" value="Flavi_E_C"/>
    <property type="match status" value="1"/>
</dbReference>
<dbReference type="CDD" id="cd17038">
    <property type="entry name" value="Flavi_M"/>
    <property type="match status" value="1"/>
</dbReference>
<dbReference type="CDD" id="cd23204">
    <property type="entry name" value="Flavivirus_RdRp"/>
    <property type="match status" value="1"/>
</dbReference>
<dbReference type="FunFam" id="1.20.1280.260:FF:000001">
    <property type="entry name" value="Envelope glycoprotein"/>
    <property type="match status" value="1"/>
</dbReference>
<dbReference type="FunFam" id="1.10.260.90:FF:000001">
    <property type="entry name" value="Genome polyprotein"/>
    <property type="match status" value="1"/>
</dbReference>
<dbReference type="FunFam" id="2.40.10.120:FF:000006">
    <property type="entry name" value="Genome polyprotein"/>
    <property type="match status" value="1"/>
</dbReference>
<dbReference type="FunFam" id="2.60.260.50:FF:000001">
    <property type="entry name" value="Genome polyprotein"/>
    <property type="match status" value="1"/>
</dbReference>
<dbReference type="FunFam" id="3.30.70.2840:FF:000001">
    <property type="entry name" value="Genome polyprotein"/>
    <property type="match status" value="1"/>
</dbReference>
<dbReference type="FunFam" id="3.30.70.2840:FF:000002">
    <property type="entry name" value="Genome polyprotein"/>
    <property type="match status" value="1"/>
</dbReference>
<dbReference type="FunFam" id="3.40.50.150:FF:000105">
    <property type="entry name" value="Genome polyprotein"/>
    <property type="match status" value="1"/>
</dbReference>
<dbReference type="FunFam" id="3.40.50.300:FF:000763">
    <property type="entry name" value="Genome polyprotein"/>
    <property type="match status" value="1"/>
</dbReference>
<dbReference type="Gene3D" id="1.10.260.90">
    <property type="match status" value="1"/>
</dbReference>
<dbReference type="Gene3D" id="1.20.1280.260">
    <property type="match status" value="1"/>
</dbReference>
<dbReference type="Gene3D" id="2.40.10.120">
    <property type="match status" value="2"/>
</dbReference>
<dbReference type="Gene3D" id="2.60.40.350">
    <property type="match status" value="1"/>
</dbReference>
<dbReference type="Gene3D" id="1.10.8.970">
    <property type="entry name" value="Flavivirus envelope glycoprotein M-like"/>
    <property type="match status" value="1"/>
</dbReference>
<dbReference type="Gene3D" id="2.60.260.50">
    <property type="entry name" value="Flavivirus polyprotein propeptide domain"/>
    <property type="match status" value="1"/>
</dbReference>
<dbReference type="Gene3D" id="3.30.70.2840">
    <property type="entry name" value="Flavivirus RNA-directed RNA polymerase, thumb domain"/>
    <property type="match status" value="3"/>
</dbReference>
<dbReference type="Gene3D" id="3.40.50.300">
    <property type="entry name" value="P-loop containing nucleotide triphosphate hydrolases"/>
    <property type="match status" value="2"/>
</dbReference>
<dbReference type="Gene3D" id="2.60.98.10">
    <property type="entry name" value="Tick-borne Encephalitis virus Glycoprotein, domain 1"/>
    <property type="match status" value="1"/>
</dbReference>
<dbReference type="Gene3D" id="3.40.50.150">
    <property type="entry name" value="Vaccinia Virus protein VP39"/>
    <property type="match status" value="1"/>
</dbReference>
<dbReference type="Gene3D" id="3.30.67.10">
    <property type="entry name" value="Viral Envelope Glycoprotein, domain 2"/>
    <property type="match status" value="1"/>
</dbReference>
<dbReference type="Gene3D" id="3.30.387.10">
    <property type="entry name" value="Viral Envelope Glycoprotein, domain 3"/>
    <property type="match status" value="1"/>
</dbReference>
<dbReference type="InterPro" id="IPR043502">
    <property type="entry name" value="DNA/RNA_pol_sf"/>
</dbReference>
<dbReference type="InterPro" id="IPR000069">
    <property type="entry name" value="Env_glycoprot_M_flavivir"/>
</dbReference>
<dbReference type="InterPro" id="IPR038302">
    <property type="entry name" value="Env_glycoprot_M_sf_flavivir"/>
</dbReference>
<dbReference type="InterPro" id="IPR013755">
    <property type="entry name" value="Flav_gly_cen_dom_subdom1"/>
</dbReference>
<dbReference type="InterPro" id="IPR001122">
    <property type="entry name" value="Flavi_capsidC"/>
</dbReference>
<dbReference type="InterPro" id="IPR011492">
    <property type="entry name" value="Flavi_DEAD"/>
</dbReference>
<dbReference type="InterPro" id="IPR027287">
    <property type="entry name" value="Flavi_E_Ig-like"/>
</dbReference>
<dbReference type="InterPro" id="IPR026470">
    <property type="entry name" value="Flavi_E_Stem/Anchor_dom"/>
</dbReference>
<dbReference type="InterPro" id="IPR038345">
    <property type="entry name" value="Flavi_E_Stem/Anchor_dom_sf"/>
</dbReference>
<dbReference type="InterPro" id="IPR011998">
    <property type="entry name" value="Flavi_Glycoprot_E_cen/dimer"/>
</dbReference>
<dbReference type="InterPro" id="IPR001157">
    <property type="entry name" value="Flavi_NS1"/>
</dbReference>
<dbReference type="InterPro" id="IPR000752">
    <property type="entry name" value="Flavi_NS2A"/>
</dbReference>
<dbReference type="InterPro" id="IPR000487">
    <property type="entry name" value="Flavi_NS2B"/>
</dbReference>
<dbReference type="InterPro" id="IPR001850">
    <property type="entry name" value="Flavi_NS3_S7"/>
</dbReference>
<dbReference type="InterPro" id="IPR000404">
    <property type="entry name" value="Flavi_NS4A"/>
</dbReference>
<dbReference type="InterPro" id="IPR001528">
    <property type="entry name" value="Flavi_NS4B"/>
</dbReference>
<dbReference type="InterPro" id="IPR046811">
    <property type="entry name" value="Flavi_NS5_thumb"/>
</dbReference>
<dbReference type="InterPro" id="IPR002535">
    <property type="entry name" value="Flavi_propep"/>
</dbReference>
<dbReference type="InterPro" id="IPR038688">
    <property type="entry name" value="Flavi_propep_sf"/>
</dbReference>
<dbReference type="InterPro" id="IPR047530">
    <property type="entry name" value="Flavi_RdRp"/>
</dbReference>
<dbReference type="InterPro" id="IPR000208">
    <property type="entry name" value="Flavi_RdRp_fingers/palm"/>
</dbReference>
<dbReference type="InterPro" id="IPR000336">
    <property type="entry name" value="Flavivir/Alphavir_Ig-like_sf"/>
</dbReference>
<dbReference type="InterPro" id="IPR014412">
    <property type="entry name" value="Gen_Poly_FLV"/>
</dbReference>
<dbReference type="InterPro" id="IPR036253">
    <property type="entry name" value="Glycoprot_cen/dimer_sf"/>
</dbReference>
<dbReference type="InterPro" id="IPR038055">
    <property type="entry name" value="Glycoprot_E_dimer_dom"/>
</dbReference>
<dbReference type="InterPro" id="IPR013756">
    <property type="entry name" value="GlyE_cen_dom_subdom2"/>
</dbReference>
<dbReference type="InterPro" id="IPR014001">
    <property type="entry name" value="Helicase_ATP-bd"/>
</dbReference>
<dbReference type="InterPro" id="IPR001650">
    <property type="entry name" value="Helicase_C-like"/>
</dbReference>
<dbReference type="InterPro" id="IPR014756">
    <property type="entry name" value="Ig_E-set"/>
</dbReference>
<dbReference type="InterPro" id="IPR026490">
    <property type="entry name" value="mRNA_cap_0/1_MeTrfase"/>
</dbReference>
<dbReference type="InterPro" id="IPR049486">
    <property type="entry name" value="NS3-hel_C_flaviviridae"/>
</dbReference>
<dbReference type="InterPro" id="IPR027417">
    <property type="entry name" value="P-loop_NTPase"/>
</dbReference>
<dbReference type="InterPro" id="IPR009003">
    <property type="entry name" value="Peptidase_S1_PA"/>
</dbReference>
<dbReference type="InterPro" id="IPR007094">
    <property type="entry name" value="RNA-dir_pol_PSvirus"/>
</dbReference>
<dbReference type="InterPro" id="IPR002877">
    <property type="entry name" value="RNA_MeTrfase_FtsJ_dom"/>
</dbReference>
<dbReference type="InterPro" id="IPR029063">
    <property type="entry name" value="SAM-dependent_MTases_sf"/>
</dbReference>
<dbReference type="NCBIfam" id="TIGR04240">
    <property type="entry name" value="flavi_E_stem"/>
    <property type="match status" value="1"/>
</dbReference>
<dbReference type="Pfam" id="PF20907">
    <property type="entry name" value="Flav_NS3-hel_C"/>
    <property type="match status" value="1"/>
</dbReference>
<dbReference type="Pfam" id="PF01003">
    <property type="entry name" value="Flavi_capsid"/>
    <property type="match status" value="1"/>
</dbReference>
<dbReference type="Pfam" id="PF07652">
    <property type="entry name" value="Flavi_DEAD"/>
    <property type="match status" value="1"/>
</dbReference>
<dbReference type="Pfam" id="PF21659">
    <property type="entry name" value="Flavi_E_stem"/>
    <property type="match status" value="1"/>
</dbReference>
<dbReference type="Pfam" id="PF02832">
    <property type="entry name" value="Flavi_glycop_C"/>
    <property type="match status" value="1"/>
</dbReference>
<dbReference type="Pfam" id="PF00869">
    <property type="entry name" value="Flavi_glycoprot"/>
    <property type="match status" value="1"/>
</dbReference>
<dbReference type="Pfam" id="PF01004">
    <property type="entry name" value="Flavi_M"/>
    <property type="match status" value="1"/>
</dbReference>
<dbReference type="Pfam" id="PF00948">
    <property type="entry name" value="Flavi_NS1"/>
    <property type="match status" value="1"/>
</dbReference>
<dbReference type="Pfam" id="PF01005">
    <property type="entry name" value="Flavi_NS2A"/>
    <property type="match status" value="1"/>
</dbReference>
<dbReference type="Pfam" id="PF01002">
    <property type="entry name" value="Flavi_NS2B"/>
    <property type="match status" value="1"/>
</dbReference>
<dbReference type="Pfam" id="PF01350">
    <property type="entry name" value="Flavi_NS4A"/>
    <property type="match status" value="1"/>
</dbReference>
<dbReference type="Pfam" id="PF01349">
    <property type="entry name" value="Flavi_NS4B"/>
    <property type="match status" value="1"/>
</dbReference>
<dbReference type="Pfam" id="PF00972">
    <property type="entry name" value="Flavi_NS5"/>
    <property type="match status" value="1"/>
</dbReference>
<dbReference type="Pfam" id="PF20483">
    <property type="entry name" value="Flavi_NS5_thumb"/>
    <property type="match status" value="1"/>
</dbReference>
<dbReference type="Pfam" id="PF01570">
    <property type="entry name" value="Flavi_propep"/>
    <property type="match status" value="1"/>
</dbReference>
<dbReference type="Pfam" id="PF01728">
    <property type="entry name" value="FtsJ"/>
    <property type="match status" value="1"/>
</dbReference>
<dbReference type="Pfam" id="PF00949">
    <property type="entry name" value="Peptidase_S7"/>
    <property type="match status" value="1"/>
</dbReference>
<dbReference type="PIRSF" id="PIRSF003817">
    <property type="entry name" value="Gen_Poly_FLV"/>
    <property type="match status" value="1"/>
</dbReference>
<dbReference type="SMART" id="SM00487">
    <property type="entry name" value="DEXDc"/>
    <property type="match status" value="1"/>
</dbReference>
<dbReference type="SMART" id="SM00490">
    <property type="entry name" value="HELICc"/>
    <property type="match status" value="1"/>
</dbReference>
<dbReference type="SUPFAM" id="SSF56672">
    <property type="entry name" value="DNA/RNA polymerases"/>
    <property type="match status" value="1"/>
</dbReference>
<dbReference type="SUPFAM" id="SSF81296">
    <property type="entry name" value="E set domains"/>
    <property type="match status" value="1"/>
</dbReference>
<dbReference type="SUPFAM" id="SSF52540">
    <property type="entry name" value="P-loop containing nucleoside triphosphate hydrolases"/>
    <property type="match status" value="2"/>
</dbReference>
<dbReference type="SUPFAM" id="SSF53335">
    <property type="entry name" value="S-adenosyl-L-methionine-dependent methyltransferases"/>
    <property type="match status" value="1"/>
</dbReference>
<dbReference type="SUPFAM" id="SSF50494">
    <property type="entry name" value="Trypsin-like serine proteases"/>
    <property type="match status" value="1"/>
</dbReference>
<dbReference type="SUPFAM" id="SSF56983">
    <property type="entry name" value="Viral glycoprotein, central and dimerisation domains"/>
    <property type="match status" value="1"/>
</dbReference>
<dbReference type="PROSITE" id="PS51527">
    <property type="entry name" value="FLAVIVIRUS_NS2B"/>
    <property type="match status" value="1"/>
</dbReference>
<dbReference type="PROSITE" id="PS51528">
    <property type="entry name" value="FLAVIVIRUS_NS3PRO"/>
    <property type="match status" value="1"/>
</dbReference>
<dbReference type="PROSITE" id="PS51192">
    <property type="entry name" value="HELICASE_ATP_BIND_1"/>
    <property type="match status" value="1"/>
</dbReference>
<dbReference type="PROSITE" id="PS51194">
    <property type="entry name" value="HELICASE_CTER"/>
    <property type="match status" value="1"/>
</dbReference>
<dbReference type="PROSITE" id="PS50507">
    <property type="entry name" value="RDRP_SSRNA_POS"/>
    <property type="match status" value="1"/>
</dbReference>
<dbReference type="PROSITE" id="PS51591">
    <property type="entry name" value="RNA_CAP01_NS5_MT"/>
    <property type="match status" value="1"/>
</dbReference>
<name>POLG_YEFVF</name>
<protein>
    <recommendedName>
        <fullName>Genome polyprotein</fullName>
    </recommendedName>
    <component>
        <recommendedName>
            <fullName>Capsid protein C</fullName>
        </recommendedName>
        <alternativeName>
            <fullName>Core protein</fullName>
        </alternativeName>
    </component>
    <component>
        <recommendedName>
            <fullName>Protein prM</fullName>
        </recommendedName>
    </component>
    <component>
        <recommendedName>
            <fullName>Peptide pr</fullName>
        </recommendedName>
    </component>
    <component>
        <recommendedName>
            <fullName>Small envelope protein M</fullName>
        </recommendedName>
        <alternativeName>
            <fullName>Matrix protein</fullName>
        </alternativeName>
    </component>
    <component>
        <recommendedName>
            <fullName>Envelope protein E</fullName>
        </recommendedName>
    </component>
    <component>
        <recommendedName>
            <fullName>Non-structural protein 1</fullName>
            <shortName>NS1</shortName>
        </recommendedName>
    </component>
    <component>
        <recommendedName>
            <fullName>Non-structural protein 2A</fullName>
            <shortName>NS2A</shortName>
        </recommendedName>
    </component>
    <component>
        <recommendedName>
            <fullName>Non-structural protein 2A-alpha</fullName>
            <shortName>NS2A-alpha</shortName>
        </recommendedName>
    </component>
    <component>
        <recommendedName>
            <fullName>Serine protease subunit NS2B</fullName>
        </recommendedName>
        <alternativeName>
            <fullName>Flavivirin protease NS2B regulatory subunit</fullName>
        </alternativeName>
        <alternativeName>
            <fullName>Non-structural protein 2B</fullName>
        </alternativeName>
    </component>
    <component>
        <recommendedName>
            <fullName>Serine protease NS3</fullName>
            <ecNumber>3.4.21.91</ecNumber>
            <ecNumber evidence="10">3.6.1.15</ecNumber>
            <ecNumber evidence="10">3.6.4.13</ecNumber>
        </recommendedName>
        <alternativeName>
            <fullName>Flavivirin protease NS3 catalytic subunit</fullName>
        </alternativeName>
        <alternativeName>
            <fullName>Non-structural protein 3</fullName>
        </alternativeName>
    </component>
    <component>
        <recommendedName>
            <fullName>Non-structural protein 4A</fullName>
            <shortName>NS4A</shortName>
        </recommendedName>
    </component>
    <component>
        <recommendedName>
            <fullName>Peptide 2k</fullName>
        </recommendedName>
    </component>
    <component>
        <recommendedName>
            <fullName>Non-structural protein 4B</fullName>
            <shortName>NS4B</shortName>
        </recommendedName>
    </component>
    <component>
        <recommendedName>
            <fullName>RNA-directed RNA polymerase NS5</fullName>
            <ecNumber evidence="16">2.1.1.56</ecNumber>
            <ecNumber evidence="16">2.1.1.57</ecNumber>
            <ecNumber evidence="12">2.7.7.48</ecNumber>
        </recommendedName>
        <alternativeName>
            <fullName>Non-structural protein 5</fullName>
        </alternativeName>
    </component>
</protein>
<sequence length="3411" mass="379189">MSGRKAQGKTLGVNMVRRGVRSLSNKIKQKTKQIGNRPGPSRGVQGFIFFFLFNILTGKKITAHLKRLWKMLDPRQGLAALRKVKRVVAGLMRGLSSRKRRSHDVLTVQFLILGMLLMTGGVTLVRKNRWLLLNVTSEDLGKTFSMGTGNCTTNILEAKYWCPDSMEYNCPNLSPREEPDDIDCWCYGVENVRVAYGKCDSAGRSRRSRRAIDLPTHENHGLKTRQEKWMTGRMGERQLQKIERWFVRNPFFAVTALTIAYLVGSNMTQRVVIALLVLAVGPAYSAHCIGITDRDFIEGVHGGTWVSATLEQDKCVTVMAPDKPSLDISLETVAIDGPVEARKVCYNAVLTHVKINDKCPSTGEAHLAEENEGDNACKRTYSDRGWGNGCGLFGKGSIVACAKFTCAKSMSLFEVDQTKIQYVIRARLHVGAKQENWKTDIKTLKFDALSGSQEAEFTGYGKATLECQVQTAVDFGNSYIAEMEKESWIVDRQWAQDLTLPWQSGSGGVWREMHHLVEFEPPHAATIRVLALGDQEGSLKTALTGAMRVTKDTNDNNLYKLHGGHVSCRVKLSALTLKGTSYKMCTDKMSFVKNPTDTGHGTVVMQVKVPKGAPCRIPVIVADDLTAAINKGILVTVNPIASTNDDEVLIEVNPPFGDSYIIVGTGDSRLTYQWHKEGSSIGKLFTQTMKGAERLAVMGDAAWDFSSAGGFFTSVGKGIHTVFGSAFQGLFGGLNWITKVIIGAVLIWVGINTRNMTMSMSMILVGVIMMFLSLGVGADQGCAINFAKRELKCGDGIFIFRDSDDWLNKYSYYPEDPVKLASIVKASFEEGKCGLNSVDSLEHEMWRSRADEINAILEENEVDISVVVQDPKNVYQRGTHPFSRIRDGLQYGWKTWGKNLVFSPGRKNGSFIIDGKSRKECPFSNRVWNSFQIEEFGTGVFTTRVYMDAVFEYTIDCDGSILGAAVNGKKSAHGSPTFWMGSHEVNGTWMIHTLEALDYKECEWPLTHTIGTSVEESEMFMPRSIGGPVSSHNHIPGYKVQTNGPWMQVPLEVKREACPGTSVIIDGNCDGRGKSARSTTDSGKIIPEWCCRSCTMPPVSFHGSDGCWYPMEIRPRKTHESHLVRSWVTAGEIHAVPFGLVSMMIALEVVLRKRQGPKQMLVGGVVLLGAMLVGQVTLLDLLKLTVAVGLHFHEMNNGGDAMYMALIAAFSVRPGLLIGFGLRTLWSPRERLVLALGAAMVEIALGGMMGGLWKYLNAVSLCILTINAVASRKASNTILPLMALLTPVTMAEVRLATMLFCTVVIIGVLYQNSKDTSMQKTIPLVALTLTSYLGLTQPFLGLCAFLATRIFGRRSIPVNEALAAAGLVGVLAGLAFQEMENFLGPIAVGGILMMLVSVAGRVDGLELKKLGEVAWEEEAEISGSSARYDVALSEQGEFKLLSEEKVPWDQVVMTSLALVGAAIHPFALLLVLAGWLFHVRGARRSGDVLWDIPTPKVIEECEHLEDGIYGIFQSTFLGASQRGVGVAQGGVFHTMWHVTRGAFLVRNGKKLIPSWASVKEDLVAYGGSWKLEGRWDGEEEVQLIAAVPGKNVVNVQTKPSLFKVRNGGEIGAVALDYPSGTSGSPIVNRNGEVIGLYGNGILVGDNSFVSAISQTEVKEEGKEELQEIPTMLKKGKTTILDFHPGAGKTRRFLPQILAECARRRLRTLVLAPTRVVLSEMKEAFHGLDVKFHTQAFSAHGSGREVIDAMCHATLTYRMLEPTRIVNWEVIIMDEAHFLDPASIAARGWAAHRARANESATILMTATPPGTSDEFPHSNGEIEDVQTDIPSEPWNTGHDWILADKRPTAWFLPSIRAANVMAASLRKAGKSVVVLNRKTFEREYPTIKQKKPDFILATDIAEMGANLCVERVLDCRTAFKPVLVDEGRKVAIKGPLRISASSAAQRRGRIGRNPNRDGDSYYYSEPTSEDNAHHVCWLEASMLLDNMEVRGGMVAPLYGVEGTKTPVSPGEMRLRDDQRKVFRELVRNCDLPVWLSWQVAKAGLKTNDRKWCFEGPEEHEILNDSGETVKCRTPGGAKKPLRPRWCDERVSSDQSALSEFIKFAEGRRGAAEVLVVLSELPDFLAKKGGEAMDTISVLLHSEEGSRAYRNALSMMPEAMTIVMLFILAGLLTSGMVIFFMSPKGISRMSMAMGTMAGCGYLMFLGGVKPTHISYIMLIFFVLMVVVIPEPGQQRSIQDNQVAFLIIGILTLVSVVAANELGMLEKTKEDLFGKKNSIPSSASPWSWPDLDLKPGAAWTVYVGIVTMLSPMLHHWIKVEYGNLSLSGIAQSASVLSFMDKGIPFMKMNISVIMLLISGWNSITVMPLLCGIGCAMLHWSLILPGIKAQQSKLAQRRVFHGVAKNPVVDGNPTVDIEEAPEMPVLYEKKLALYLLLALSLASVAMCRTPFSLAEGIVLASAALGPLIEGNTSLLWNGPMAVSMTGVMRGNYYAFVGVMYNLWKMKTGRRGTANGKTLGEVWKRELNLLDKQQFELYKRTDIVEVDRDTARRHLAEGKVDTGVAVSRGTAKLRWFHERGYVKLEGRVIDLGCGRGGWCYYAAAQKEVSGVKGFTLGRDGHEKPMNVQSLGWNIITFKDKTDIHRLEPVKCDTLLCDIGESSSSSVTEGERTVRVLDTVEKWLACGVDNFCVKVLAPYMPDVLEKLELLQRRFGGTVIRNPLSRNSTHEMYYVSGARSNVTFTVNQTSRLLMRRMRRPTGKVTLEADVTLPIGTRSVETDKGPLDKEAIEERVERIKSEYMTSWFYDNDNPYRTWHYCGSYVTKTSGSAASMVNGVIKILTYPWDKIEEVTRMAMTDTTPFGQQRVFKEKVDTRAKDPPAGTRKIMKVVNRWLFRHLAREKNPRLCTKEEFIAKVRSHAAIGAYLEEQEQWKTANEAVQDPKFWELVDEERKLHQQGRCRTCVYNMMGKREKKLSEFGKAKGSRAIWYMWLGARYLEFEALGFLNEDHWASRENSGGGVEGIGLQYLGYVIRDLAAMDGGGFYADDTAGWDTRITEADLDDEQEILNYMSPHHKKLAQAVMEMTYKNKVVKVLRPAPGGKAYMDVISRRDQRGSGQVVTYALNTITNLKVQLIRMAEAEMVIHHQHVQDCDESVLTRLEAWLTEHGCNRLRRMAVSGDDCVVRPIDDRFGLALSHLNAMSKVRKDISEWQPSKGWNDWENVPFCSHHFHELQLKDGRRIVVPCREQDELIGRGRVSPGNGWMIKETACLSKAYANMWSLMYFHKRDMRLLSLAVSSAVPTSWVPQGRTTWSIHGKGEWMTTEDMLEVWNRVWITNNPHMQDKTMVKEWRDVPYLTKRQDKLCGSLIGMTNRATWASHIHLVIHRIRTLVGQEKYTDYLTVMDRYSVDADLQPGELI</sequence>